<protein>
    <recommendedName>
        <fullName>Rhodopsin</fullName>
    </recommendedName>
</protein>
<sequence length="348" mass="39111">TEGPFFYIPMVNTSGVVRSPYEYPQYYLVNPAAYAILGAYMFFLIIIGFPVNFMTLYVTLEHKKLRTPLNYILLNLAVADLFMVIGGFTTTMYSSMHGYFVLGRLGCNMEGFSATLGGMISLWSLAVLAIERWVVVCKPISNFRFGENHAIMGVSLTWFMALACTVPPLVGWSRYIPEGMQCSCGIDYYTRAEGFNNESFVLYMFFCHFLVPLVIIFFCYGRLLCAVKEAAAAQQESETTQRAEREVTRMVIIMVIGFLVCWLPYASVAWFIFTHQGSEFGPLFMTIPAFFAKSSSIYNPMIYICMNKQFRNCMITTLFCGKNPFEGEEEGASSTKTEASSASSVSPA</sequence>
<name>OPSD_SARPU</name>
<accession>P79902</accession>
<gene>
    <name type="primary">rho</name>
</gene>
<proteinExistence type="evidence at transcript level"/>
<feature type="chain" id="PRO_0000197713" description="Rhodopsin">
    <location>
        <begin position="1" status="less than"/>
        <end position="348"/>
    </location>
</feature>
<feature type="topological domain" description="Extracellular" evidence="8">
    <location>
        <begin position="1" status="less than"/>
        <end position="33"/>
    </location>
</feature>
<feature type="transmembrane region" description="Helical; Name=1" evidence="1">
    <location>
        <begin position="34"/>
        <end position="58"/>
    </location>
</feature>
<feature type="topological domain" description="Cytoplasmic" evidence="8">
    <location>
        <begin position="59"/>
        <end position="70"/>
    </location>
</feature>
<feature type="transmembrane region" description="Helical; Name=2" evidence="1">
    <location>
        <begin position="71"/>
        <end position="93"/>
    </location>
</feature>
<feature type="topological domain" description="Extracellular" evidence="8">
    <location>
        <begin position="94"/>
        <end position="107"/>
    </location>
</feature>
<feature type="transmembrane region" description="Helical; Name=3" evidence="1">
    <location>
        <begin position="108"/>
        <end position="130"/>
    </location>
</feature>
<feature type="topological domain" description="Cytoplasmic" evidence="8">
    <location>
        <begin position="131"/>
        <end position="149"/>
    </location>
</feature>
<feature type="transmembrane region" description="Helical; Name=4" evidence="1">
    <location>
        <begin position="150"/>
        <end position="170"/>
    </location>
</feature>
<feature type="topological domain" description="Extracellular" evidence="8">
    <location>
        <begin position="171"/>
        <end position="199"/>
    </location>
</feature>
<feature type="transmembrane region" description="Helical; Name=5" evidence="1">
    <location>
        <begin position="200"/>
        <end position="221"/>
    </location>
</feature>
<feature type="topological domain" description="Cytoplasmic" evidence="8">
    <location>
        <begin position="222"/>
        <end position="249"/>
    </location>
</feature>
<feature type="transmembrane region" description="Helical; Name=6" evidence="1">
    <location>
        <begin position="250"/>
        <end position="271"/>
    </location>
</feature>
<feature type="topological domain" description="Extracellular" evidence="8">
    <location>
        <begin position="272"/>
        <end position="283"/>
    </location>
</feature>
<feature type="transmembrane region" description="Helical; Name=7" evidence="1">
    <location>
        <begin position="284"/>
        <end position="305"/>
    </location>
</feature>
<feature type="topological domain" description="Cytoplasmic" evidence="8">
    <location>
        <begin position="306"/>
        <end position="348"/>
    </location>
</feature>
<feature type="region of interest" description="Disordered" evidence="7">
    <location>
        <begin position="327"/>
        <end position="348"/>
    </location>
</feature>
<feature type="short sequence motif" description="'Ionic lock' involved in activated form stabilization" evidence="1">
    <location>
        <begin position="131"/>
        <end position="133"/>
    </location>
</feature>
<feature type="compositionally biased region" description="Low complexity" evidence="7">
    <location>
        <begin position="332"/>
        <end position="348"/>
    </location>
</feature>
<feature type="site" description="Plays an important role in the conformation switch to the active conformation" evidence="1">
    <location>
        <position position="110"/>
    </location>
</feature>
<feature type="modified residue" description="N6-(retinylidene)lysine" evidence="1">
    <location>
        <position position="293"/>
    </location>
</feature>
<feature type="lipid moiety-binding region" description="S-palmitoyl cysteine" evidence="1">
    <location>
        <position position="320"/>
    </location>
</feature>
<feature type="glycosylation site" description="N-linked (GlcNAc...) asparagine" evidence="5">
    <location>
        <position position="12"/>
    </location>
</feature>
<feature type="glycosylation site" description="N-linked (GlcNAc...) asparagine" evidence="5">
    <location>
        <position position="197"/>
    </location>
</feature>
<feature type="disulfide bond" evidence="6">
    <location>
        <begin position="107"/>
        <end position="184"/>
    </location>
</feature>
<feature type="non-terminal residue">
    <location>
        <position position="1"/>
    </location>
</feature>
<comment type="function">
    <text evidence="1 2 3">Photoreceptor required for image-forming vision at low light intensity. While most salt water fish species use retinal as chromophore, most freshwater fish use 3-dehydroretinal, or a mixture of retinal and 3-dehydroretinal (By similarity). Light-induced isomerization of 11-cis to all-trans retinal triggers a conformational change that activates signaling via G-proteins. Subsequent receptor phosphorylation mediates displacement of the bound G-protein alpha subunit by arrestin and terminates signaling (By similarity).</text>
</comment>
<comment type="subcellular location">
    <subcellularLocation>
        <location evidence="2">Membrane</location>
        <topology evidence="2">Multi-pass membrane protein</topology>
    </subcellularLocation>
    <subcellularLocation>
        <location evidence="4">Cell projection</location>
        <location evidence="4">Cilium</location>
        <location evidence="4">Photoreceptor outer segment</location>
    </subcellularLocation>
    <text evidence="2">Synthesized in the inner segment (IS) of rod photoreceptor cells before vectorial transport to disk membranes in the rod outer segment (OS) photosensory cilia.</text>
</comment>
<comment type="PTM">
    <text evidence="1">Phosphorylated on some or all of the serine and threonine residues present in the C-terminal region.</text>
</comment>
<comment type="PTM">
    <text evidence="1">Contains one covalently linked retinal chromophore.</text>
</comment>
<comment type="similarity">
    <text evidence="6">Belongs to the G-protein coupled receptor 1 family. Opsin subfamily.</text>
</comment>
<evidence type="ECO:0000250" key="1">
    <source>
        <dbReference type="UniProtKB" id="P02699"/>
    </source>
</evidence>
<evidence type="ECO:0000250" key="2">
    <source>
        <dbReference type="UniProtKB" id="P08100"/>
    </source>
</evidence>
<evidence type="ECO:0000250" key="3">
    <source>
        <dbReference type="UniProtKB" id="P32309"/>
    </source>
</evidence>
<evidence type="ECO:0000250" key="4">
    <source>
        <dbReference type="UniProtKB" id="P35359"/>
    </source>
</evidence>
<evidence type="ECO:0000255" key="5"/>
<evidence type="ECO:0000255" key="6">
    <source>
        <dbReference type="PROSITE-ProRule" id="PRU00521"/>
    </source>
</evidence>
<evidence type="ECO:0000256" key="7">
    <source>
        <dbReference type="SAM" id="MobiDB-lite"/>
    </source>
</evidence>
<evidence type="ECO:0000305" key="8"/>
<dbReference type="EMBL" id="U57543">
    <property type="protein sequence ID" value="AAB39530.1"/>
    <property type="molecule type" value="mRNA"/>
</dbReference>
<dbReference type="SMR" id="P79902"/>
<dbReference type="GlyCosmos" id="P79902">
    <property type="glycosylation" value="2 sites, No reported glycans"/>
</dbReference>
<dbReference type="GO" id="GO:0016020">
    <property type="term" value="C:membrane"/>
    <property type="evidence" value="ECO:0000250"/>
    <property type="project" value="UniProtKB"/>
</dbReference>
<dbReference type="GO" id="GO:0097381">
    <property type="term" value="C:photoreceptor disc membrane"/>
    <property type="evidence" value="ECO:0000250"/>
    <property type="project" value="UniProtKB"/>
</dbReference>
<dbReference type="GO" id="GO:0005886">
    <property type="term" value="C:plasma membrane"/>
    <property type="evidence" value="ECO:0000250"/>
    <property type="project" value="UniProtKB"/>
</dbReference>
<dbReference type="GO" id="GO:0005502">
    <property type="term" value="F:11-cis retinal binding"/>
    <property type="evidence" value="ECO:0000250"/>
    <property type="project" value="UniProtKB"/>
</dbReference>
<dbReference type="GO" id="GO:0008020">
    <property type="term" value="F:G protein-coupled photoreceptor activity"/>
    <property type="evidence" value="ECO:0000250"/>
    <property type="project" value="UniProtKB"/>
</dbReference>
<dbReference type="GO" id="GO:0016038">
    <property type="term" value="P:absorption of visible light"/>
    <property type="evidence" value="ECO:0000250"/>
    <property type="project" value="UniProtKB"/>
</dbReference>
<dbReference type="GO" id="GO:0016056">
    <property type="term" value="P:G protein-coupled opsin signaling pathway"/>
    <property type="evidence" value="ECO:0000250"/>
    <property type="project" value="UniProtKB"/>
</dbReference>
<dbReference type="GO" id="GO:0007601">
    <property type="term" value="P:visual perception"/>
    <property type="evidence" value="ECO:0007669"/>
    <property type="project" value="UniProtKB-KW"/>
</dbReference>
<dbReference type="CDD" id="cd15080">
    <property type="entry name" value="7tmA_MWS_opsin"/>
    <property type="match status" value="1"/>
</dbReference>
<dbReference type="FunFam" id="1.20.1070.10:FF:000018">
    <property type="entry name" value="Rhodopsin"/>
    <property type="match status" value="1"/>
</dbReference>
<dbReference type="Gene3D" id="1.20.1070.10">
    <property type="entry name" value="Rhodopsin 7-helix transmembrane proteins"/>
    <property type="match status" value="1"/>
</dbReference>
<dbReference type="InterPro" id="IPR050125">
    <property type="entry name" value="GPCR_opsins"/>
</dbReference>
<dbReference type="InterPro" id="IPR000276">
    <property type="entry name" value="GPCR_Rhodpsn"/>
</dbReference>
<dbReference type="InterPro" id="IPR017452">
    <property type="entry name" value="GPCR_Rhodpsn_7TM"/>
</dbReference>
<dbReference type="InterPro" id="IPR001760">
    <property type="entry name" value="Opsin"/>
</dbReference>
<dbReference type="InterPro" id="IPR027430">
    <property type="entry name" value="Retinal_BS"/>
</dbReference>
<dbReference type="InterPro" id="IPR000732">
    <property type="entry name" value="Rhodopsin"/>
</dbReference>
<dbReference type="InterPro" id="IPR019477">
    <property type="entry name" value="Rhodopsin_N"/>
</dbReference>
<dbReference type="PANTHER" id="PTHR24240">
    <property type="entry name" value="OPSIN"/>
    <property type="match status" value="1"/>
</dbReference>
<dbReference type="Pfam" id="PF00001">
    <property type="entry name" value="7tm_1"/>
    <property type="match status" value="1"/>
</dbReference>
<dbReference type="Pfam" id="PF10413">
    <property type="entry name" value="Rhodopsin_N"/>
    <property type="match status" value="1"/>
</dbReference>
<dbReference type="PRINTS" id="PR00237">
    <property type="entry name" value="GPCRRHODOPSN"/>
</dbReference>
<dbReference type="PRINTS" id="PR00238">
    <property type="entry name" value="OPSIN"/>
</dbReference>
<dbReference type="PRINTS" id="PR00579">
    <property type="entry name" value="RHODOPSIN"/>
</dbReference>
<dbReference type="SUPFAM" id="SSF81321">
    <property type="entry name" value="Family A G protein-coupled receptor-like"/>
    <property type="match status" value="1"/>
</dbReference>
<dbReference type="PROSITE" id="PS00237">
    <property type="entry name" value="G_PROTEIN_RECEP_F1_1"/>
    <property type="match status" value="1"/>
</dbReference>
<dbReference type="PROSITE" id="PS50262">
    <property type="entry name" value="G_PROTEIN_RECEP_F1_2"/>
    <property type="match status" value="1"/>
</dbReference>
<dbReference type="PROSITE" id="PS00238">
    <property type="entry name" value="OPSIN"/>
    <property type="match status" value="1"/>
</dbReference>
<keyword id="KW-0966">Cell projection</keyword>
<keyword id="KW-0157">Chromophore</keyword>
<keyword id="KW-1015">Disulfide bond</keyword>
<keyword id="KW-0297">G-protein coupled receptor</keyword>
<keyword id="KW-0325">Glycoprotein</keyword>
<keyword id="KW-0449">Lipoprotein</keyword>
<keyword id="KW-0472">Membrane</keyword>
<keyword id="KW-0564">Palmitate</keyword>
<keyword id="KW-0597">Phosphoprotein</keyword>
<keyword id="KW-0600">Photoreceptor protein</keyword>
<keyword id="KW-0675">Receptor</keyword>
<keyword id="KW-0681">Retinal protein</keyword>
<keyword id="KW-0716">Sensory transduction</keyword>
<keyword id="KW-0807">Transducer</keyword>
<keyword id="KW-0812">Transmembrane</keyword>
<keyword id="KW-1133">Transmembrane helix</keyword>
<keyword id="KW-0844">Vision</keyword>
<reference key="1">
    <citation type="submission" date="1997-01" db="EMBL/GenBank/DDBJ databases">
        <title>Molecular phylogeny of 11 holocentrid fishes (Order Beryciformes) inferred from rhodopsin cDNA and cytochrome b.</title>
        <authorList>
            <person name="Toller W.W."/>
            <person name="Moses K."/>
            <person name="McFall-Ngai M.J."/>
        </authorList>
    </citation>
    <scope>NUCLEOTIDE SEQUENCE [MRNA]</scope>
    <source>
        <tissue>Eye</tissue>
    </source>
</reference>
<organism>
    <name type="scientific">Sargocentron punctatissimum</name>
    <name type="common">Speckled squirrelfish</name>
    <name type="synonym">Holocentrum punctatissimum</name>
    <dbReference type="NCBI Taxonomy" id="47711"/>
    <lineage>
        <taxon>Eukaryota</taxon>
        <taxon>Metazoa</taxon>
        <taxon>Chordata</taxon>
        <taxon>Craniata</taxon>
        <taxon>Vertebrata</taxon>
        <taxon>Euteleostomi</taxon>
        <taxon>Actinopterygii</taxon>
        <taxon>Neopterygii</taxon>
        <taxon>Teleostei</taxon>
        <taxon>Neoteleostei</taxon>
        <taxon>Acanthomorphata</taxon>
        <taxon>Holocentriformes</taxon>
        <taxon>Holocentridae</taxon>
        <taxon>Sargocentron</taxon>
    </lineage>
</organism>